<accession>A0A5C1RGE8</accession>
<evidence type="ECO:0000255" key="1"/>
<evidence type="ECO:0000255" key="2">
    <source>
        <dbReference type="PROSITE-ProRule" id="PRU00498"/>
    </source>
</evidence>
<evidence type="ECO:0000256" key="3">
    <source>
        <dbReference type="SAM" id="MobiDB-lite"/>
    </source>
</evidence>
<evidence type="ECO:0000303" key="4">
    <source>
    </source>
</evidence>
<evidence type="ECO:0000305" key="5">
    <source>
    </source>
</evidence>
<sequence length="517" mass="56789">MSPDSRDPEAQRDVGLTKNTSSVNIPLESVKTDKTSNASPIMGPGEGPKIDDTLVSWSGPDDSQNPQNMPQWKKWVITWLLSFLNVWVTFSSTIFASAVRTTSLEYGVSRVVMTLGVSLTVLGFAVGPLIWGPMSEVIGRLTPFYFGYAVFCIFQIPVGVAQNVYTILICRFFIGFFGTSAMAVTPGVLADIFSPKDRGVAVSVYAAAAFIGPIFGPIVGGFVVDSSLGWRWTAWITLILASAFGLAALVFVPETYGPIILQRRAARLRQETRNFAYHSALDENPPTLNDIIFKYFLRPFQMLIKEPILLLVTLYISLVYGVLYLFFVAYPIEFLEVRRWTHAGVAALPLLAVMLGTLAGCLTILFVTGHTYPRKMAKMGRVPPEERLKLMMVGSVSLPIGLFWFGWTSSRSVHWFAQTAAGFPIGIGLALIWVQGLSFLIDVYLMFANSALAGNTLIRSAVGAAFPLFGAPMYHKLGVNWASSLLGFLSVAMIPIPVAFYYYGPKIRAMSKFSPKL</sequence>
<keyword id="KW-0325">Glycoprotein</keyword>
<keyword id="KW-0472">Membrane</keyword>
<keyword id="KW-0812">Transmembrane</keyword>
<keyword id="KW-1133">Transmembrane helix</keyword>
<keyword id="KW-0813">Transport</keyword>
<keyword id="KW-0843">Virulence</keyword>
<gene>
    <name evidence="4" type="ORF">orf6</name>
</gene>
<proteinExistence type="inferred from homology"/>
<comment type="function">
    <text evidence="5">MFS transporter; part of the gene cluster that mediates the biosynthesis the mycotoxin ascochitine, an o-quinone methide that plays a possible protective role against other microbial competitors in nature and is considered to be important for pathogenicity of legume-associated Didymella species.</text>
</comment>
<comment type="subcellular location">
    <subcellularLocation>
        <location evidence="1">Membrane</location>
        <topology evidence="1">Multi-pass membrane protein</topology>
    </subcellularLocation>
</comment>
<comment type="similarity">
    <text evidence="1">Belongs to the major facilitator superfamily. CAR1 family.</text>
</comment>
<organism>
    <name type="scientific">Didymella fabae</name>
    <name type="common">Leaf and pod spot disease fungus</name>
    <name type="synonym">Ascochyta fabae</name>
    <dbReference type="NCBI Taxonomy" id="372025"/>
    <lineage>
        <taxon>Eukaryota</taxon>
        <taxon>Fungi</taxon>
        <taxon>Dikarya</taxon>
        <taxon>Ascomycota</taxon>
        <taxon>Pezizomycotina</taxon>
        <taxon>Dothideomycetes</taxon>
        <taxon>Pleosporomycetidae</taxon>
        <taxon>Pleosporales</taxon>
        <taxon>Pleosporineae</taxon>
        <taxon>Didymellaceae</taxon>
        <taxon>Ascochyta</taxon>
    </lineage>
</organism>
<protein>
    <recommendedName>
        <fullName evidence="4">Ascochitine biosynthesis cluster MFS transporter</fullName>
    </recommendedName>
    <alternativeName>
        <fullName evidence="4">Ascochitine biosynthesis cluster protein 6</fullName>
    </alternativeName>
</protein>
<feature type="chain" id="PRO_0000448993" description="Ascochitine biosynthesis cluster MFS transporter">
    <location>
        <begin position="1"/>
        <end position="517"/>
    </location>
</feature>
<feature type="transmembrane region" description="Helical" evidence="1">
    <location>
        <begin position="75"/>
        <end position="95"/>
    </location>
</feature>
<feature type="transmembrane region" description="Helical" evidence="1">
    <location>
        <begin position="111"/>
        <end position="131"/>
    </location>
</feature>
<feature type="transmembrane region" description="Helical" evidence="1">
    <location>
        <begin position="141"/>
        <end position="161"/>
    </location>
</feature>
<feature type="transmembrane region" description="Helical" evidence="1">
    <location>
        <begin position="172"/>
        <end position="192"/>
    </location>
</feature>
<feature type="transmembrane region" description="Helical" evidence="1">
    <location>
        <begin position="204"/>
        <end position="224"/>
    </location>
</feature>
<feature type="transmembrane region" description="Helical" evidence="1">
    <location>
        <begin position="232"/>
        <end position="252"/>
    </location>
</feature>
<feature type="transmembrane region" description="Helical" evidence="1">
    <location>
        <begin position="308"/>
        <end position="328"/>
    </location>
</feature>
<feature type="transmembrane region" description="Helical" evidence="1">
    <location>
        <begin position="347"/>
        <end position="367"/>
    </location>
</feature>
<feature type="transmembrane region" description="Helical" evidence="1">
    <location>
        <begin position="390"/>
        <end position="410"/>
    </location>
</feature>
<feature type="transmembrane region" description="Helical" evidence="1">
    <location>
        <begin position="421"/>
        <end position="441"/>
    </location>
</feature>
<feature type="transmembrane region" description="Helical" evidence="1">
    <location>
        <begin position="457"/>
        <end position="475"/>
    </location>
</feature>
<feature type="transmembrane region" description="Helical" evidence="1">
    <location>
        <begin position="485"/>
        <end position="505"/>
    </location>
</feature>
<feature type="region of interest" description="Disordered" evidence="3">
    <location>
        <begin position="1"/>
        <end position="45"/>
    </location>
</feature>
<feature type="compositionally biased region" description="Basic and acidic residues" evidence="3">
    <location>
        <begin position="1"/>
        <end position="12"/>
    </location>
</feature>
<feature type="glycosylation site" description="N-linked (GlcNAc...) asparagine" evidence="2">
    <location>
        <position position="19"/>
    </location>
</feature>
<reference key="1">
    <citation type="journal article" date="2019" name="MSphere">
        <title>Identification of a polyketide synthase gene responsible for ascochitine biosynthesis in Ascochyta fabae and its abrogation in sister taxa.</title>
        <authorList>
            <person name="Kim W."/>
            <person name="Lichtenzveig J."/>
            <person name="Syme R.A."/>
            <person name="Williams A.H."/>
            <person name="Peever T.L."/>
            <person name="Chen W."/>
        </authorList>
    </citation>
    <scope>NUCLEOTIDE SEQUENCE [GENOMIC DNA]</scope>
    <scope>FUNCTION</scope>
    <source>
        <strain>AF247/15</strain>
    </source>
</reference>
<dbReference type="EMBL" id="MN052627">
    <property type="protein sequence ID" value="QEN17974.1"/>
    <property type="molecule type" value="Genomic_DNA"/>
</dbReference>
<dbReference type="SMR" id="A0A5C1RGE8"/>
<dbReference type="GO" id="GO:0005886">
    <property type="term" value="C:plasma membrane"/>
    <property type="evidence" value="ECO:0007669"/>
    <property type="project" value="TreeGrafter"/>
</dbReference>
<dbReference type="GO" id="GO:0022857">
    <property type="term" value="F:transmembrane transporter activity"/>
    <property type="evidence" value="ECO:0007669"/>
    <property type="project" value="InterPro"/>
</dbReference>
<dbReference type="CDD" id="cd17323">
    <property type="entry name" value="MFS_Tpo1_MDR_like"/>
    <property type="match status" value="1"/>
</dbReference>
<dbReference type="FunFam" id="1.20.1250.20:FF:000011">
    <property type="entry name" value="MFS multidrug transporter, putative"/>
    <property type="match status" value="1"/>
</dbReference>
<dbReference type="Gene3D" id="1.20.1250.20">
    <property type="entry name" value="MFS general substrate transporter like domains"/>
    <property type="match status" value="1"/>
</dbReference>
<dbReference type="InterPro" id="IPR011701">
    <property type="entry name" value="MFS"/>
</dbReference>
<dbReference type="InterPro" id="IPR020846">
    <property type="entry name" value="MFS_dom"/>
</dbReference>
<dbReference type="InterPro" id="IPR036259">
    <property type="entry name" value="MFS_trans_sf"/>
</dbReference>
<dbReference type="PANTHER" id="PTHR23502">
    <property type="entry name" value="MAJOR FACILITATOR SUPERFAMILY"/>
    <property type="match status" value="1"/>
</dbReference>
<dbReference type="PANTHER" id="PTHR23502:SF47">
    <property type="entry name" value="MAJOR FACILITATOR SUPERFAMILY (MFS) PROFILE DOMAIN-CONTAINING PROTEIN-RELATED"/>
    <property type="match status" value="1"/>
</dbReference>
<dbReference type="Pfam" id="PF07690">
    <property type="entry name" value="MFS_1"/>
    <property type="match status" value="1"/>
</dbReference>
<dbReference type="SUPFAM" id="SSF103473">
    <property type="entry name" value="MFS general substrate transporter"/>
    <property type="match status" value="1"/>
</dbReference>
<dbReference type="PROSITE" id="PS50850">
    <property type="entry name" value="MFS"/>
    <property type="match status" value="1"/>
</dbReference>
<name>ASC6_DIDFA</name>